<evidence type="ECO:0000250" key="1"/>
<evidence type="ECO:0000250" key="2">
    <source>
        <dbReference type="UniProtKB" id="Q04695"/>
    </source>
</evidence>
<evidence type="ECO:0000250" key="3">
    <source>
        <dbReference type="UniProtKB" id="Q61414"/>
    </source>
</evidence>
<evidence type="ECO:0000250" key="4">
    <source>
        <dbReference type="UniProtKB" id="Q6IFV3"/>
    </source>
</evidence>
<evidence type="ECO:0000250" key="5">
    <source>
        <dbReference type="UniProtKB" id="Q9QWL7"/>
    </source>
</evidence>
<evidence type="ECO:0000255" key="6"/>
<evidence type="ECO:0000255" key="7">
    <source>
        <dbReference type="PROSITE-ProRule" id="PRU01188"/>
    </source>
</evidence>
<evidence type="ECO:0000256" key="8">
    <source>
        <dbReference type="SAM" id="MobiDB-lite"/>
    </source>
</evidence>
<evidence type="ECO:0000269" key="9">
    <source>
    </source>
</evidence>
<evidence type="ECO:0000305" key="10"/>
<evidence type="ECO:0000312" key="11">
    <source>
        <dbReference type="EMBL" id="AAI00059.1"/>
    </source>
</evidence>
<evidence type="ECO:0000312" key="12">
    <source>
        <dbReference type="EMBL" id="DAA04484.1"/>
    </source>
</evidence>
<evidence type="ECO:0000312" key="13">
    <source>
        <dbReference type="RGD" id="1303181"/>
    </source>
</evidence>
<evidence type="ECO:0007744" key="14">
    <source>
    </source>
</evidence>
<comment type="function">
    <text evidence="2 5">Type I keratin involved in the formation and maintenance of various skin appendages, specifically in determining shape and orientation of hair. Required for the correct growth of hair follicles, in particular for the persistence of the anagen (growth) state. Modulates the function of TNF-alpha in the specific context of hair cycling. Regulates protein synthesis and epithelial cell growth through binding to the adapter protein SFN and by stimulating Akt/mTOR pathway. Involved in tissue repair. May be a marker of basal cell differentiation in complex epithelia and therefore indicative of a certain type of epithelial 'stem cells'. Acts as a promoter of epithelial proliferation by acting a regulator of immune response in skin: promotes Th1/Th17-dominated immune environment contributing to the development of basaloid skin tumors. May act as an autoantigen in the immunopathogenesis of psoriasis, with certain peptide regions being a major target for autoreactive T-cells and hence causing their proliferation.</text>
</comment>
<comment type="subunit">
    <text evidence="5 10">Heterodimer of a type I and a type II keratin. KRT17 associates with KRT6 isomers (KRT6A or KRT6B). Interacts with TRADD and SFN (By similarity).</text>
</comment>
<comment type="subcellular location">
    <subcellularLocation>
        <location evidence="5">Cytoplasm</location>
    </subcellularLocation>
</comment>
<comment type="PTM">
    <text evidence="1">Phosphorylation at Ser-44 occurs in a growth- and stress-dependent fashion in skin keratinocytes, it has no effect on filament organization.</text>
</comment>
<comment type="miscellaneous">
    <text evidence="10">There are two types of cytoskeletal and microfibrillar keratin: I (acidic; 40-55 kDa) and II (neutral to basic; 56-70 kDa).</text>
</comment>
<comment type="similarity">
    <text evidence="7">Belongs to the intermediate filament family.</text>
</comment>
<proteinExistence type="evidence at protein level"/>
<feature type="chain" id="PRO_0000310579" description="Keratin, type I cytoskeletal 17">
    <location>
        <begin position="1"/>
        <end position="433"/>
    </location>
</feature>
<feature type="domain" description="IF rod" evidence="7">
    <location>
        <begin position="84"/>
        <end position="395"/>
    </location>
</feature>
<feature type="region of interest" description="Head">
    <location>
        <begin position="1"/>
        <end position="83"/>
    </location>
</feature>
<feature type="region of interest" description="Disordered" evidence="8">
    <location>
        <begin position="1"/>
        <end position="24"/>
    </location>
</feature>
<feature type="region of interest" description="Coil 1A" evidence="6">
    <location>
        <begin position="84"/>
        <end position="120"/>
    </location>
</feature>
<feature type="region of interest" description="Linker 1" evidence="6">
    <location>
        <begin position="121"/>
        <end position="138"/>
    </location>
</feature>
<feature type="region of interest" description="Coil 1B" evidence="6">
    <location>
        <begin position="139"/>
        <end position="230"/>
    </location>
</feature>
<feature type="region of interest" description="Linker 12" evidence="6">
    <location>
        <begin position="231"/>
        <end position="250"/>
    </location>
</feature>
<feature type="region of interest" description="Coil 2" evidence="6">
    <location>
        <begin position="251"/>
        <end position="392"/>
    </location>
</feature>
<feature type="region of interest" description="Tail" evidence="6">
    <location>
        <begin position="393"/>
        <end position="433"/>
    </location>
</feature>
<feature type="modified residue" description="Phosphoserine" evidence="2">
    <location>
        <position position="12"/>
    </location>
</feature>
<feature type="modified residue" description="Phosphoserine" evidence="2">
    <location>
        <position position="13"/>
    </location>
</feature>
<feature type="modified residue" description="Phosphoserine" evidence="3">
    <location>
        <position position="25"/>
    </location>
</feature>
<feature type="modified residue" description="Phosphoserine" evidence="2">
    <location>
        <position position="32"/>
    </location>
</feature>
<feature type="modified residue" description="Phosphoserine" evidence="14">
    <location>
        <position position="34"/>
    </location>
</feature>
<feature type="modified residue" description="Phosphoserine" evidence="14">
    <location>
        <position position="39"/>
    </location>
</feature>
<feature type="modified residue" description="Phosphoserine; by RPS6KA1" evidence="2">
    <location>
        <position position="44"/>
    </location>
</feature>
<feature type="modified residue" description="Phosphothreonine" evidence="2">
    <location>
        <position position="110"/>
    </location>
</feature>
<feature type="modified residue" description="Phosphothreonine" evidence="4">
    <location>
        <position position="279"/>
    </location>
</feature>
<feature type="modified residue" description="Phosphoserine" evidence="2">
    <location>
        <position position="323"/>
    </location>
</feature>
<feature type="cross-link" description="Glycyl lysine isopeptide (Lys-Gly) (interchain with G-Cter in SUMO1); alternate" evidence="2">
    <location>
        <position position="15"/>
    </location>
</feature>
<feature type="cross-link" description="Glycyl lysine isopeptide (Lys-Gly) (interchain with G-Cter in SUMO2); alternate" evidence="2">
    <location>
        <position position="15"/>
    </location>
</feature>
<feature type="cross-link" description="Glycyl lysine isopeptide (Lys-Gly) (interchain with G-Cter in SUMO2)" evidence="2">
    <location>
        <position position="278"/>
    </location>
</feature>
<feature type="cross-link" description="Glycyl lysine isopeptide (Lys-Gly) (interchain with G-Cter in SUMO1); alternate" evidence="2">
    <location>
        <position position="399"/>
    </location>
</feature>
<feature type="cross-link" description="Glycyl lysine isopeptide (Lys-Gly) (interchain with G-Cter in SUMO2); alternate" evidence="2">
    <location>
        <position position="399"/>
    </location>
</feature>
<feature type="cross-link" description="Glycyl lysine isopeptide (Lys-Gly) (interchain with G-Cter in SUMO1); alternate" evidence="2">
    <location>
        <position position="401"/>
    </location>
</feature>
<feature type="cross-link" description="Glycyl lysine isopeptide (Lys-Gly) (interchain with G-Cter in SUMO2); alternate" evidence="2">
    <location>
        <position position="401"/>
    </location>
</feature>
<feature type="cross-link" description="Glycyl lysine isopeptide (Lys-Gly) (interchain with G-Cter in SUMO1); alternate" evidence="2">
    <location>
        <position position="420"/>
    </location>
</feature>
<feature type="cross-link" description="Glycyl lysine isopeptide (Lys-Gly) (interchain with G-Cter in SUMO2); alternate" evidence="2">
    <location>
        <position position="420"/>
    </location>
</feature>
<accession>Q6IFU8</accession>
<dbReference type="EMBL" id="AABR03073469">
    <property type="status" value="NOT_ANNOTATED_CDS"/>
    <property type="molecule type" value="Genomic_DNA"/>
</dbReference>
<dbReference type="EMBL" id="BC100058">
    <property type="protein sequence ID" value="AAI00059.1"/>
    <property type="molecule type" value="mRNA"/>
</dbReference>
<dbReference type="EMBL" id="BK004050">
    <property type="protein sequence ID" value="DAA04484.1"/>
    <property type="molecule type" value="mRNA"/>
</dbReference>
<dbReference type="RefSeq" id="NP_997710.1">
    <property type="nucleotide sequence ID" value="NM_212545.2"/>
</dbReference>
<dbReference type="SMR" id="Q6IFU8"/>
<dbReference type="BioGRID" id="252298">
    <property type="interactions" value="2"/>
</dbReference>
<dbReference type="FunCoup" id="Q6IFU8">
    <property type="interactions" value="258"/>
</dbReference>
<dbReference type="IntAct" id="Q6IFU8">
    <property type="interactions" value="1"/>
</dbReference>
<dbReference type="STRING" id="10116.ENSRNOP00000005382"/>
<dbReference type="GlyGen" id="Q6IFU8">
    <property type="glycosylation" value="1 site, 1 O-linked glycan (1 site)"/>
</dbReference>
<dbReference type="iPTMnet" id="Q6IFU8"/>
<dbReference type="PhosphoSitePlus" id="Q6IFU8"/>
<dbReference type="jPOST" id="Q6IFU8"/>
<dbReference type="PaxDb" id="10116-ENSRNOP00000005382"/>
<dbReference type="Ensembl" id="ENSRNOT00000005382.7">
    <property type="protein sequence ID" value="ENSRNOP00000005382.5"/>
    <property type="gene ID" value="ENSRNOG00000026371.8"/>
</dbReference>
<dbReference type="GeneID" id="287702"/>
<dbReference type="KEGG" id="rno:287702"/>
<dbReference type="UCSC" id="RGD:1303181">
    <property type="organism name" value="rat"/>
</dbReference>
<dbReference type="AGR" id="RGD:1303181"/>
<dbReference type="CTD" id="3872"/>
<dbReference type="RGD" id="1303181">
    <property type="gene designation" value="Krt17"/>
</dbReference>
<dbReference type="eggNOG" id="ENOG502QTM6">
    <property type="taxonomic scope" value="Eukaryota"/>
</dbReference>
<dbReference type="GeneTree" id="ENSGT00940000160681"/>
<dbReference type="HOGENOM" id="CLU_012560_8_1_1"/>
<dbReference type="InParanoid" id="Q6IFU8"/>
<dbReference type="OMA" id="QYKTKEP"/>
<dbReference type="OrthoDB" id="2441647at2759"/>
<dbReference type="PhylomeDB" id="Q6IFU8"/>
<dbReference type="TreeFam" id="TF332742"/>
<dbReference type="Reactome" id="R-RNO-6805567">
    <property type="pathway name" value="Keratinization"/>
</dbReference>
<dbReference type="Reactome" id="R-RNO-6809371">
    <property type="pathway name" value="Formation of the cornified envelope"/>
</dbReference>
<dbReference type="PRO" id="PR:Q6IFU8"/>
<dbReference type="Proteomes" id="UP000002494">
    <property type="component" value="Chromosome 10"/>
</dbReference>
<dbReference type="Bgee" id="ENSRNOG00000026371">
    <property type="expression patterns" value="Expressed in thymus and 8 other cell types or tissues"/>
</dbReference>
<dbReference type="ExpressionAtlas" id="Q6IFU8">
    <property type="expression patterns" value="baseline and differential"/>
</dbReference>
<dbReference type="GO" id="GO:0071944">
    <property type="term" value="C:cell periphery"/>
    <property type="evidence" value="ECO:0000266"/>
    <property type="project" value="RGD"/>
</dbReference>
<dbReference type="GO" id="GO:0001533">
    <property type="term" value="C:cornified envelope"/>
    <property type="evidence" value="ECO:0000266"/>
    <property type="project" value="RGD"/>
</dbReference>
<dbReference type="GO" id="GO:0005737">
    <property type="term" value="C:cytoplasm"/>
    <property type="evidence" value="ECO:0000266"/>
    <property type="project" value="RGD"/>
</dbReference>
<dbReference type="GO" id="GO:0005856">
    <property type="term" value="C:cytoskeleton"/>
    <property type="evidence" value="ECO:0000318"/>
    <property type="project" value="GO_Central"/>
</dbReference>
<dbReference type="GO" id="GO:0005882">
    <property type="term" value="C:intermediate filament"/>
    <property type="evidence" value="ECO:0000304"/>
    <property type="project" value="RGD"/>
</dbReference>
<dbReference type="GO" id="GO:0045095">
    <property type="term" value="C:keratin filament"/>
    <property type="evidence" value="ECO:0000304"/>
    <property type="project" value="RGD"/>
</dbReference>
<dbReference type="GO" id="GO:0005200">
    <property type="term" value="F:structural constituent of cytoskeleton"/>
    <property type="evidence" value="ECO:0000304"/>
    <property type="project" value="RGD"/>
</dbReference>
<dbReference type="GO" id="GO:0030855">
    <property type="term" value="P:epithelial cell differentiation"/>
    <property type="evidence" value="ECO:0000318"/>
    <property type="project" value="GO_Central"/>
</dbReference>
<dbReference type="GO" id="GO:0031069">
    <property type="term" value="P:hair follicle morphogenesis"/>
    <property type="evidence" value="ECO:0000250"/>
    <property type="project" value="UniProtKB"/>
</dbReference>
<dbReference type="GO" id="GO:0045109">
    <property type="term" value="P:intermediate filament organization"/>
    <property type="evidence" value="ECO:0000266"/>
    <property type="project" value="RGD"/>
</dbReference>
<dbReference type="GO" id="GO:0045103">
    <property type="term" value="P:intermediate filament-based process"/>
    <property type="evidence" value="ECO:0000304"/>
    <property type="project" value="RGD"/>
</dbReference>
<dbReference type="GO" id="GO:0031424">
    <property type="term" value="P:keratinization"/>
    <property type="evidence" value="ECO:0000266"/>
    <property type="project" value="RGD"/>
</dbReference>
<dbReference type="GO" id="GO:0002009">
    <property type="term" value="P:morphogenesis of an epithelium"/>
    <property type="evidence" value="ECO:0000266"/>
    <property type="project" value="RGD"/>
</dbReference>
<dbReference type="GO" id="GO:0030307">
    <property type="term" value="P:positive regulation of cell growth"/>
    <property type="evidence" value="ECO:0000266"/>
    <property type="project" value="RGD"/>
</dbReference>
<dbReference type="GO" id="GO:0051798">
    <property type="term" value="P:positive regulation of hair follicle development"/>
    <property type="evidence" value="ECO:0000266"/>
    <property type="project" value="RGD"/>
</dbReference>
<dbReference type="GO" id="GO:0045727">
    <property type="term" value="P:positive regulation of translation"/>
    <property type="evidence" value="ECO:0000266"/>
    <property type="project" value="RGD"/>
</dbReference>
<dbReference type="FunFam" id="1.20.5.1160:FF:000002">
    <property type="entry name" value="Type I keratin 10"/>
    <property type="match status" value="1"/>
</dbReference>
<dbReference type="FunFam" id="1.20.5.170:FF:000002">
    <property type="entry name" value="Type I keratin KA11"/>
    <property type="match status" value="1"/>
</dbReference>
<dbReference type="FunFam" id="1.20.5.500:FF:000001">
    <property type="entry name" value="Type II keratin 23"/>
    <property type="match status" value="1"/>
</dbReference>
<dbReference type="Gene3D" id="1.20.5.170">
    <property type="match status" value="1"/>
</dbReference>
<dbReference type="Gene3D" id="1.20.5.500">
    <property type="entry name" value="Single helix bin"/>
    <property type="match status" value="1"/>
</dbReference>
<dbReference type="Gene3D" id="1.20.5.1160">
    <property type="entry name" value="Vasodilator-stimulated phosphoprotein"/>
    <property type="match status" value="1"/>
</dbReference>
<dbReference type="InterPro" id="IPR018039">
    <property type="entry name" value="IF_conserved"/>
</dbReference>
<dbReference type="InterPro" id="IPR039008">
    <property type="entry name" value="IF_rod_dom"/>
</dbReference>
<dbReference type="InterPro" id="IPR002957">
    <property type="entry name" value="Keratin_I"/>
</dbReference>
<dbReference type="PANTHER" id="PTHR23239">
    <property type="entry name" value="INTERMEDIATE FILAMENT"/>
    <property type="match status" value="1"/>
</dbReference>
<dbReference type="PANTHER" id="PTHR23239:SF180">
    <property type="entry name" value="KERATIN, TYPE I CYTOSKELETAL 17"/>
    <property type="match status" value="1"/>
</dbReference>
<dbReference type="Pfam" id="PF00038">
    <property type="entry name" value="Filament"/>
    <property type="match status" value="1"/>
</dbReference>
<dbReference type="PRINTS" id="PR01248">
    <property type="entry name" value="TYPE1KERATIN"/>
</dbReference>
<dbReference type="SMART" id="SM01391">
    <property type="entry name" value="Filament"/>
    <property type="match status" value="1"/>
</dbReference>
<dbReference type="SUPFAM" id="SSF64593">
    <property type="entry name" value="Intermediate filament protein, coiled coil region"/>
    <property type="match status" value="2"/>
</dbReference>
<dbReference type="SUPFAM" id="SSF46579">
    <property type="entry name" value="Prefoldin"/>
    <property type="match status" value="1"/>
</dbReference>
<dbReference type="PROSITE" id="PS00226">
    <property type="entry name" value="IF_ROD_1"/>
    <property type="match status" value="1"/>
</dbReference>
<dbReference type="PROSITE" id="PS51842">
    <property type="entry name" value="IF_ROD_2"/>
    <property type="match status" value="1"/>
</dbReference>
<keyword id="KW-0175">Coiled coil</keyword>
<keyword id="KW-0963">Cytoplasm</keyword>
<keyword id="KW-0403">Intermediate filament</keyword>
<keyword id="KW-1017">Isopeptide bond</keyword>
<keyword id="KW-0416">Keratin</keyword>
<keyword id="KW-0597">Phosphoprotein</keyword>
<keyword id="KW-1185">Reference proteome</keyword>
<keyword id="KW-0832">Ubl conjugation</keyword>
<gene>
    <name evidence="2" type="primary">Krt17</name>
    <name evidence="13" type="synonym">Ka17</name>
</gene>
<reference evidence="10" key="1">
    <citation type="journal article" date="2004" name="Nature">
        <title>Genome sequence of the Brown Norway rat yields insights into mammalian evolution.</title>
        <authorList>
            <person name="Gibbs R.A."/>
            <person name="Weinstock G.M."/>
            <person name="Metzker M.L."/>
            <person name="Muzny D.M."/>
            <person name="Sodergren E.J."/>
            <person name="Scherer S."/>
            <person name="Scott G."/>
            <person name="Steffen D."/>
            <person name="Worley K.C."/>
            <person name="Burch P.E."/>
            <person name="Okwuonu G."/>
            <person name="Hines S."/>
            <person name="Lewis L."/>
            <person name="Deramo C."/>
            <person name="Delgado O."/>
            <person name="Dugan-Rocha S."/>
            <person name="Miner G."/>
            <person name="Morgan M."/>
            <person name="Hawes A."/>
            <person name="Gill R."/>
            <person name="Holt R.A."/>
            <person name="Adams M.D."/>
            <person name="Amanatides P.G."/>
            <person name="Baden-Tillson H."/>
            <person name="Barnstead M."/>
            <person name="Chin S."/>
            <person name="Evans C.A."/>
            <person name="Ferriera S."/>
            <person name="Fosler C."/>
            <person name="Glodek A."/>
            <person name="Gu Z."/>
            <person name="Jennings D."/>
            <person name="Kraft C.L."/>
            <person name="Nguyen T."/>
            <person name="Pfannkoch C.M."/>
            <person name="Sitter C."/>
            <person name="Sutton G.G."/>
            <person name="Venter J.C."/>
            <person name="Woodage T."/>
            <person name="Smith D."/>
            <person name="Lee H.-M."/>
            <person name="Gustafson E."/>
            <person name="Cahill P."/>
            <person name="Kana A."/>
            <person name="Doucette-Stamm L."/>
            <person name="Weinstock K."/>
            <person name="Fechtel K."/>
            <person name="Weiss R.B."/>
            <person name="Dunn D.M."/>
            <person name="Green E.D."/>
            <person name="Blakesley R.W."/>
            <person name="Bouffard G.G."/>
            <person name="De Jong P.J."/>
            <person name="Osoegawa K."/>
            <person name="Zhu B."/>
            <person name="Marra M."/>
            <person name="Schein J."/>
            <person name="Bosdet I."/>
            <person name="Fjell C."/>
            <person name="Jones S."/>
            <person name="Krzywinski M."/>
            <person name="Mathewson C."/>
            <person name="Siddiqui A."/>
            <person name="Wye N."/>
            <person name="McPherson J."/>
            <person name="Zhao S."/>
            <person name="Fraser C.M."/>
            <person name="Shetty J."/>
            <person name="Shatsman S."/>
            <person name="Geer K."/>
            <person name="Chen Y."/>
            <person name="Abramzon S."/>
            <person name="Nierman W.C."/>
            <person name="Havlak P.H."/>
            <person name="Chen R."/>
            <person name="Durbin K.J."/>
            <person name="Egan A."/>
            <person name="Ren Y."/>
            <person name="Song X.-Z."/>
            <person name="Li B."/>
            <person name="Liu Y."/>
            <person name="Qin X."/>
            <person name="Cawley S."/>
            <person name="Cooney A.J."/>
            <person name="D'Souza L.M."/>
            <person name="Martin K."/>
            <person name="Wu J.Q."/>
            <person name="Gonzalez-Garay M.L."/>
            <person name="Jackson A.R."/>
            <person name="Kalafus K.J."/>
            <person name="McLeod M.P."/>
            <person name="Milosavljevic A."/>
            <person name="Virk D."/>
            <person name="Volkov A."/>
            <person name="Wheeler D.A."/>
            <person name="Zhang Z."/>
            <person name="Bailey J.A."/>
            <person name="Eichler E.E."/>
            <person name="Tuzun E."/>
            <person name="Birney E."/>
            <person name="Mongin E."/>
            <person name="Ureta-Vidal A."/>
            <person name="Woodwark C."/>
            <person name="Zdobnov E."/>
            <person name="Bork P."/>
            <person name="Suyama M."/>
            <person name="Torrents D."/>
            <person name="Alexandersson M."/>
            <person name="Trask B.J."/>
            <person name="Young J.M."/>
            <person name="Huang H."/>
            <person name="Wang H."/>
            <person name="Xing H."/>
            <person name="Daniels S."/>
            <person name="Gietzen D."/>
            <person name="Schmidt J."/>
            <person name="Stevens K."/>
            <person name="Vitt U."/>
            <person name="Wingrove J."/>
            <person name="Camara F."/>
            <person name="Mar Alba M."/>
            <person name="Abril J.F."/>
            <person name="Guigo R."/>
            <person name="Smit A."/>
            <person name="Dubchak I."/>
            <person name="Rubin E.M."/>
            <person name="Couronne O."/>
            <person name="Poliakov A."/>
            <person name="Huebner N."/>
            <person name="Ganten D."/>
            <person name="Goesele C."/>
            <person name="Hummel O."/>
            <person name="Kreitler T."/>
            <person name="Lee Y.-A."/>
            <person name="Monti J."/>
            <person name="Schulz H."/>
            <person name="Zimdahl H."/>
            <person name="Himmelbauer H."/>
            <person name="Lehrach H."/>
            <person name="Jacob H.J."/>
            <person name="Bromberg S."/>
            <person name="Gullings-Handley J."/>
            <person name="Jensen-Seaman M.I."/>
            <person name="Kwitek A.E."/>
            <person name="Lazar J."/>
            <person name="Pasko D."/>
            <person name="Tonellato P.J."/>
            <person name="Twigger S."/>
            <person name="Ponting C.P."/>
            <person name="Duarte J.M."/>
            <person name="Rice S."/>
            <person name="Goodstadt L."/>
            <person name="Beatson S.A."/>
            <person name="Emes R.D."/>
            <person name="Winter E.E."/>
            <person name="Webber C."/>
            <person name="Brandt P."/>
            <person name="Nyakatura G."/>
            <person name="Adetobi M."/>
            <person name="Chiaromonte F."/>
            <person name="Elnitski L."/>
            <person name="Eswara P."/>
            <person name="Hardison R.C."/>
            <person name="Hou M."/>
            <person name="Kolbe D."/>
            <person name="Makova K."/>
            <person name="Miller W."/>
            <person name="Nekrutenko A."/>
            <person name="Riemer C."/>
            <person name="Schwartz S."/>
            <person name="Taylor J."/>
            <person name="Yang S."/>
            <person name="Zhang Y."/>
            <person name="Lindpaintner K."/>
            <person name="Andrews T.D."/>
            <person name="Caccamo M."/>
            <person name="Clamp M."/>
            <person name="Clarke L."/>
            <person name="Curwen V."/>
            <person name="Durbin R.M."/>
            <person name="Eyras E."/>
            <person name="Searle S.M."/>
            <person name="Cooper G.M."/>
            <person name="Batzoglou S."/>
            <person name="Brudno M."/>
            <person name="Sidow A."/>
            <person name="Stone E.A."/>
            <person name="Payseur B.A."/>
            <person name="Bourque G."/>
            <person name="Lopez-Otin C."/>
            <person name="Puente X.S."/>
            <person name="Chakrabarti K."/>
            <person name="Chatterji S."/>
            <person name="Dewey C."/>
            <person name="Pachter L."/>
            <person name="Bray N."/>
            <person name="Yap V.B."/>
            <person name="Caspi A."/>
            <person name="Tesler G."/>
            <person name="Pevzner P.A."/>
            <person name="Haussler D."/>
            <person name="Roskin K.M."/>
            <person name="Baertsch R."/>
            <person name="Clawson H."/>
            <person name="Furey T.S."/>
            <person name="Hinrichs A.S."/>
            <person name="Karolchik D."/>
            <person name="Kent W.J."/>
            <person name="Rosenbloom K.R."/>
            <person name="Trumbower H."/>
            <person name="Weirauch M."/>
            <person name="Cooper D.N."/>
            <person name="Stenson P.D."/>
            <person name="Ma B."/>
            <person name="Brent M."/>
            <person name="Arumugam M."/>
            <person name="Shteynberg D."/>
            <person name="Copley R.R."/>
            <person name="Taylor M.S."/>
            <person name="Riethman H."/>
            <person name="Mudunuri U."/>
            <person name="Peterson J."/>
            <person name="Guyer M."/>
            <person name="Felsenfeld A."/>
            <person name="Old S."/>
            <person name="Mockrin S."/>
            <person name="Collins F.S."/>
        </authorList>
    </citation>
    <scope>NUCLEOTIDE SEQUENCE [LARGE SCALE GENOMIC DNA]</scope>
    <source>
        <strain evidence="9">Brown Norway</strain>
    </source>
</reference>
<reference evidence="11" key="2">
    <citation type="journal article" date="2004" name="Genome Res.">
        <title>The status, quality, and expansion of the NIH full-length cDNA project: the Mammalian Gene Collection (MGC).</title>
        <authorList>
            <consortium name="The MGC Project Team"/>
        </authorList>
    </citation>
    <scope>NUCLEOTIDE SEQUENCE [LARGE SCALE MRNA]</scope>
    <source>
        <tissue evidence="11">Thymus</tissue>
    </source>
</reference>
<reference evidence="10 12" key="3">
    <citation type="journal article" date="2004" name="Eur. J. Cell Biol.">
        <title>Comprehensive analysis of keratin gene clusters in humans and rodents.</title>
        <authorList>
            <person name="Hesse M."/>
            <person name="Zimek A."/>
            <person name="Weber K."/>
            <person name="Magin T.M."/>
        </authorList>
    </citation>
    <scope>IDENTIFICATION</scope>
    <source>
        <strain evidence="12">Brown Norway</strain>
    </source>
</reference>
<reference key="4">
    <citation type="journal article" date="2012" name="Nat. Commun.">
        <title>Quantitative maps of protein phosphorylation sites across 14 different rat organs and tissues.</title>
        <authorList>
            <person name="Lundby A."/>
            <person name="Secher A."/>
            <person name="Lage K."/>
            <person name="Nordsborg N.B."/>
            <person name="Dmytriyev A."/>
            <person name="Lundby C."/>
            <person name="Olsen J.V."/>
        </authorList>
    </citation>
    <scope>PHOSPHORYLATION [LARGE SCALE ANALYSIS] AT SER-34 AND SER-39</scope>
    <scope>IDENTIFICATION BY MASS SPECTROMETRY [LARGE SCALE ANALYSIS]</scope>
</reference>
<organism>
    <name type="scientific">Rattus norvegicus</name>
    <name type="common">Rat</name>
    <dbReference type="NCBI Taxonomy" id="10116"/>
    <lineage>
        <taxon>Eukaryota</taxon>
        <taxon>Metazoa</taxon>
        <taxon>Chordata</taxon>
        <taxon>Craniata</taxon>
        <taxon>Vertebrata</taxon>
        <taxon>Euteleostomi</taxon>
        <taxon>Mammalia</taxon>
        <taxon>Eutheria</taxon>
        <taxon>Euarchontoglires</taxon>
        <taxon>Glires</taxon>
        <taxon>Rodentia</taxon>
        <taxon>Myomorpha</taxon>
        <taxon>Muroidea</taxon>
        <taxon>Muridae</taxon>
        <taxon>Murinae</taxon>
        <taxon>Rattus</taxon>
    </lineage>
</organism>
<protein>
    <recommendedName>
        <fullName>Keratin, type I cytoskeletal 17</fullName>
    </recommendedName>
    <alternativeName>
        <fullName>Cytokeratin-17</fullName>
        <shortName>CK-17</shortName>
    </alternativeName>
    <alternativeName>
        <fullName>Keratin-17</fullName>
        <shortName>K17</shortName>
    </alternativeName>
    <alternativeName>
        <fullName>Type I keratin Ka17</fullName>
    </alternativeName>
</protein>
<sequence length="433" mass="48123">MTTTIRQFTSSSSIKGSSGLGGGSSRTSCRLSGSLGAGSCRLGSASGLGSALGGNSYSSCYSFGTGSGYGGNFGGVDGLLAGGEKATMQNLNDRLASYLDKVRALEEANTELEVKIRDWYQKQAPGPARDYSAYYQTIEDLKNKILVATVDNASILLQIDNARLAADDFRTKFETEQALRMSVEADINGLRRVLDELTLARADLEMQIENLKEELAYLKKNHEEEMNALRGQVGGEINVEMDAAPGVDLSRILSEMRDQYEKMAEKNRKDAEDWFFSKTEELNREVATNSELVQSGKSEISELRRTMQALEIELQSQLSMKASLEGSLAETENRYCVQLSQIQGLIGSVEEQLAQLRCEMEQQNQEYKILLDVKTRLEQEIATYRRLLEGEDAHLTQYKPKEPVTTRQVRTIVEEVQDGKVISSREQVHQTTR</sequence>
<name>K1C17_RAT</name>